<protein>
    <recommendedName>
        <fullName>Probable nitrate transporter NarT</fullName>
    </recommendedName>
</protein>
<sequence>MYKTKGGFQLTLQTLSLVVGFMAWSIIAPLMPFIKQDVNVTEGQISIILAIPVILGSVLRVPFGYLTNIVGAKWVFFTSFIVLLFPIFFLSQAQTPGMLMASGFFLGVGGAIFSVGVTSVPKYFPKEKVGLANGIYGMGNIGTAVSSFLAPPIAGIIGWQTTVRSYLIIIALFALIMFIFGDTQERKIKVPLMAQMKTLSKNYKLYYLSYWYFITFGAFVAFGIFLPNYLVNHFGIDKVDAGIRSGVFIALATFLRPIGGILGDKFNAVKVLMIDFVIMIIGAVILGISDHIALFTVGCLTISICAGIGNGLIFKLVPSYFSNEAGSANGIVSMMGGLGGFFPPLVITYVANLTGSSHLAFIFLAVFGCIALFTMRHLYQKEYGSLKHS</sequence>
<name>NART_STAAM</name>
<accession>Q99RP1</accession>
<organism>
    <name type="scientific">Staphylococcus aureus (strain Mu50 / ATCC 700699)</name>
    <dbReference type="NCBI Taxonomy" id="158878"/>
    <lineage>
        <taxon>Bacteria</taxon>
        <taxon>Bacillati</taxon>
        <taxon>Bacillota</taxon>
        <taxon>Bacilli</taxon>
        <taxon>Bacillales</taxon>
        <taxon>Staphylococcaceae</taxon>
        <taxon>Staphylococcus</taxon>
    </lineage>
</organism>
<gene>
    <name type="primary">narT</name>
    <name type="synonym">narK</name>
    <name type="ordered locus">SAV2388</name>
</gene>
<comment type="function">
    <text evidence="1">Probably required for nitrate uptake under anoxic conditions. Also possibly involved in excretion of nitrite produced by the dissimilatory reduction of nitrate (By similarity).</text>
</comment>
<comment type="subcellular location">
    <subcellularLocation>
        <location evidence="3">Cell membrane</location>
        <topology evidence="3">Multi-pass membrane protein</topology>
    </subcellularLocation>
</comment>
<comment type="induction">
    <text evidence="1">Positively regulated by the two-component system NreB/NreC.</text>
</comment>
<comment type="similarity">
    <text evidence="3">Belongs to the major facilitator superfamily. Nitrate/nitrite porter (TC 2.A.1.8) family.</text>
</comment>
<keyword id="KW-1003">Cell membrane</keyword>
<keyword id="KW-0472">Membrane</keyword>
<keyword id="KW-0534">Nitrate assimilation</keyword>
<keyword id="KW-0812">Transmembrane</keyword>
<keyword id="KW-1133">Transmembrane helix</keyword>
<keyword id="KW-0813">Transport</keyword>
<proteinExistence type="inferred from homology"/>
<feature type="chain" id="PRO_0000349393" description="Probable nitrate transporter NarT">
    <location>
        <begin position="1"/>
        <end position="389"/>
    </location>
</feature>
<feature type="transmembrane region" description="Helical" evidence="2">
    <location>
        <begin position="14"/>
        <end position="34"/>
    </location>
</feature>
<feature type="transmembrane region" description="Helical" evidence="2">
    <location>
        <begin position="45"/>
        <end position="65"/>
    </location>
</feature>
<feature type="transmembrane region" description="Helical" evidence="2">
    <location>
        <begin position="69"/>
        <end position="89"/>
    </location>
</feature>
<feature type="transmembrane region" description="Helical" evidence="2">
    <location>
        <begin position="97"/>
        <end position="117"/>
    </location>
</feature>
<feature type="transmembrane region" description="Helical" evidence="2">
    <location>
        <begin position="139"/>
        <end position="159"/>
    </location>
</feature>
<feature type="transmembrane region" description="Helical" evidence="2">
    <location>
        <begin position="161"/>
        <end position="181"/>
    </location>
</feature>
<feature type="transmembrane region" description="Helical" evidence="2">
    <location>
        <begin position="211"/>
        <end position="231"/>
    </location>
</feature>
<feature type="transmembrane region" description="Helical" evidence="2">
    <location>
        <begin position="246"/>
        <end position="266"/>
    </location>
</feature>
<feature type="transmembrane region" description="Helical" evidence="2">
    <location>
        <begin position="268"/>
        <end position="288"/>
    </location>
</feature>
<feature type="transmembrane region" description="Helical" evidence="2">
    <location>
        <begin position="294"/>
        <end position="314"/>
    </location>
</feature>
<feature type="transmembrane region" description="Helical" evidence="2">
    <location>
        <begin position="331"/>
        <end position="351"/>
    </location>
</feature>
<feature type="transmembrane region" description="Helical" evidence="2">
    <location>
        <begin position="353"/>
        <end position="373"/>
    </location>
</feature>
<dbReference type="EMBL" id="BA000017">
    <property type="protein sequence ID" value="BAB58550.1"/>
    <property type="molecule type" value="Genomic_DNA"/>
</dbReference>
<dbReference type="RefSeq" id="WP_000278556.1">
    <property type="nucleotide sequence ID" value="NC_002758.2"/>
</dbReference>
<dbReference type="SMR" id="Q99RP1"/>
<dbReference type="KEGG" id="sav:SAV2388"/>
<dbReference type="HOGENOM" id="CLU_001265_14_0_9"/>
<dbReference type="PhylomeDB" id="Q99RP1"/>
<dbReference type="Proteomes" id="UP000002481">
    <property type="component" value="Chromosome"/>
</dbReference>
<dbReference type="GO" id="GO:0005886">
    <property type="term" value="C:plasma membrane"/>
    <property type="evidence" value="ECO:0007669"/>
    <property type="project" value="UniProtKB-SubCell"/>
</dbReference>
<dbReference type="GO" id="GO:0015112">
    <property type="term" value="F:nitrate transmembrane transporter activity"/>
    <property type="evidence" value="ECO:0007669"/>
    <property type="project" value="InterPro"/>
</dbReference>
<dbReference type="GO" id="GO:0042128">
    <property type="term" value="P:nitrate assimilation"/>
    <property type="evidence" value="ECO:0007669"/>
    <property type="project" value="UniProtKB-KW"/>
</dbReference>
<dbReference type="CDD" id="cd17341">
    <property type="entry name" value="MFS_NRT2_like"/>
    <property type="match status" value="1"/>
</dbReference>
<dbReference type="Gene3D" id="1.20.1250.20">
    <property type="entry name" value="MFS general substrate transporter like domains"/>
    <property type="match status" value="2"/>
</dbReference>
<dbReference type="InterPro" id="IPR011701">
    <property type="entry name" value="MFS"/>
</dbReference>
<dbReference type="InterPro" id="IPR020846">
    <property type="entry name" value="MFS_dom"/>
</dbReference>
<dbReference type="InterPro" id="IPR036259">
    <property type="entry name" value="MFS_trans_sf"/>
</dbReference>
<dbReference type="InterPro" id="IPR044772">
    <property type="entry name" value="NO3_transporter"/>
</dbReference>
<dbReference type="PANTHER" id="PTHR23515">
    <property type="entry name" value="HIGH-AFFINITY NITRATE TRANSPORTER 2.3"/>
    <property type="match status" value="1"/>
</dbReference>
<dbReference type="Pfam" id="PF07690">
    <property type="entry name" value="MFS_1"/>
    <property type="match status" value="1"/>
</dbReference>
<dbReference type="SUPFAM" id="SSF103473">
    <property type="entry name" value="MFS general substrate transporter"/>
    <property type="match status" value="1"/>
</dbReference>
<dbReference type="PROSITE" id="PS50850">
    <property type="entry name" value="MFS"/>
    <property type="match status" value="1"/>
</dbReference>
<evidence type="ECO:0000250" key="1"/>
<evidence type="ECO:0000255" key="2"/>
<evidence type="ECO:0000305" key="3"/>
<reference key="1">
    <citation type="journal article" date="2001" name="Lancet">
        <title>Whole genome sequencing of meticillin-resistant Staphylococcus aureus.</title>
        <authorList>
            <person name="Kuroda M."/>
            <person name="Ohta T."/>
            <person name="Uchiyama I."/>
            <person name="Baba T."/>
            <person name="Yuzawa H."/>
            <person name="Kobayashi I."/>
            <person name="Cui L."/>
            <person name="Oguchi A."/>
            <person name="Aoki K."/>
            <person name="Nagai Y."/>
            <person name="Lian J.-Q."/>
            <person name="Ito T."/>
            <person name="Kanamori M."/>
            <person name="Matsumaru H."/>
            <person name="Maruyama A."/>
            <person name="Murakami H."/>
            <person name="Hosoyama A."/>
            <person name="Mizutani-Ui Y."/>
            <person name="Takahashi N.K."/>
            <person name="Sawano T."/>
            <person name="Inoue R."/>
            <person name="Kaito C."/>
            <person name="Sekimizu K."/>
            <person name="Hirakawa H."/>
            <person name="Kuhara S."/>
            <person name="Goto S."/>
            <person name="Yabuzaki J."/>
            <person name="Kanehisa M."/>
            <person name="Yamashita A."/>
            <person name="Oshima K."/>
            <person name="Furuya K."/>
            <person name="Yoshino C."/>
            <person name="Shiba T."/>
            <person name="Hattori M."/>
            <person name="Ogasawara N."/>
            <person name="Hayashi H."/>
            <person name="Hiramatsu K."/>
        </authorList>
    </citation>
    <scope>NUCLEOTIDE SEQUENCE [LARGE SCALE GENOMIC DNA]</scope>
    <source>
        <strain>Mu50 / ATCC 700699</strain>
    </source>
</reference>